<sequence>MRVGLFGGSFNPAHEGHAHVAETAMHRLKLDKVIWLVSPQNPLKSSHETRPLAERMAGVRRWARGGGMIVSDAETRLGSQYTIDTLRVLRARYPGVKFVWIMGADSLATFHRWRGWTQIMREVPVAVISRPWAALKARTSPAARRFAHARWPSSAAAILADATAPAWVYLTGPLNFASSTALRGRQTKG</sequence>
<keyword id="KW-0067">ATP-binding</keyword>
<keyword id="KW-0520">NAD</keyword>
<keyword id="KW-0547">Nucleotide-binding</keyword>
<keyword id="KW-0548">Nucleotidyltransferase</keyword>
<keyword id="KW-0662">Pyridine nucleotide biosynthesis</keyword>
<keyword id="KW-0808">Transferase</keyword>
<name>NADD_CAUSK</name>
<feature type="chain" id="PRO_1000078371" description="Probable nicotinate-nucleotide adenylyltransferase">
    <location>
        <begin position="1"/>
        <end position="189"/>
    </location>
</feature>
<gene>
    <name evidence="1" type="primary">nadD</name>
    <name type="ordered locus">Caul_4718</name>
</gene>
<evidence type="ECO:0000255" key="1">
    <source>
        <dbReference type="HAMAP-Rule" id="MF_00244"/>
    </source>
</evidence>
<organism>
    <name type="scientific">Caulobacter sp. (strain K31)</name>
    <dbReference type="NCBI Taxonomy" id="366602"/>
    <lineage>
        <taxon>Bacteria</taxon>
        <taxon>Pseudomonadati</taxon>
        <taxon>Pseudomonadota</taxon>
        <taxon>Alphaproteobacteria</taxon>
        <taxon>Caulobacterales</taxon>
        <taxon>Caulobacteraceae</taxon>
        <taxon>Caulobacter</taxon>
    </lineage>
</organism>
<reference key="1">
    <citation type="submission" date="2008-01" db="EMBL/GenBank/DDBJ databases">
        <title>Complete sequence of chromosome of Caulobacter sp. K31.</title>
        <authorList>
            <consortium name="US DOE Joint Genome Institute"/>
            <person name="Copeland A."/>
            <person name="Lucas S."/>
            <person name="Lapidus A."/>
            <person name="Barry K."/>
            <person name="Glavina del Rio T."/>
            <person name="Dalin E."/>
            <person name="Tice H."/>
            <person name="Pitluck S."/>
            <person name="Bruce D."/>
            <person name="Goodwin L."/>
            <person name="Thompson L.S."/>
            <person name="Brettin T."/>
            <person name="Detter J.C."/>
            <person name="Han C."/>
            <person name="Schmutz J."/>
            <person name="Larimer F."/>
            <person name="Land M."/>
            <person name="Hauser L."/>
            <person name="Kyrpides N."/>
            <person name="Kim E."/>
            <person name="Stephens C."/>
            <person name="Richardson P."/>
        </authorList>
    </citation>
    <scope>NUCLEOTIDE SEQUENCE [LARGE SCALE GENOMIC DNA]</scope>
    <source>
        <strain>K31</strain>
    </source>
</reference>
<comment type="function">
    <text evidence="1">Catalyzes the reversible adenylation of nicotinate mononucleotide (NaMN) to nicotinic acid adenine dinucleotide (NaAD).</text>
</comment>
<comment type="catalytic activity">
    <reaction evidence="1">
        <text>nicotinate beta-D-ribonucleotide + ATP + H(+) = deamido-NAD(+) + diphosphate</text>
        <dbReference type="Rhea" id="RHEA:22860"/>
        <dbReference type="ChEBI" id="CHEBI:15378"/>
        <dbReference type="ChEBI" id="CHEBI:30616"/>
        <dbReference type="ChEBI" id="CHEBI:33019"/>
        <dbReference type="ChEBI" id="CHEBI:57502"/>
        <dbReference type="ChEBI" id="CHEBI:58437"/>
        <dbReference type="EC" id="2.7.7.18"/>
    </reaction>
</comment>
<comment type="pathway">
    <text evidence="1">Cofactor biosynthesis; NAD(+) biosynthesis; deamido-NAD(+) from nicotinate D-ribonucleotide: step 1/1.</text>
</comment>
<comment type="similarity">
    <text evidence="1">Belongs to the NadD family.</text>
</comment>
<accession>B0T316</accession>
<protein>
    <recommendedName>
        <fullName evidence="1">Probable nicotinate-nucleotide adenylyltransferase</fullName>
        <ecNumber evidence="1">2.7.7.18</ecNumber>
    </recommendedName>
    <alternativeName>
        <fullName evidence="1">Deamido-NAD(+) diphosphorylase</fullName>
    </alternativeName>
    <alternativeName>
        <fullName evidence="1">Deamido-NAD(+) pyrophosphorylase</fullName>
    </alternativeName>
    <alternativeName>
        <fullName evidence="1">Nicotinate mononucleotide adenylyltransferase</fullName>
        <shortName evidence="1">NaMN adenylyltransferase</shortName>
    </alternativeName>
</protein>
<proteinExistence type="inferred from homology"/>
<dbReference type="EC" id="2.7.7.18" evidence="1"/>
<dbReference type="EMBL" id="CP000927">
    <property type="protein sequence ID" value="ABZ73838.1"/>
    <property type="molecule type" value="Genomic_DNA"/>
</dbReference>
<dbReference type="SMR" id="B0T316"/>
<dbReference type="STRING" id="366602.Caul_4718"/>
<dbReference type="KEGG" id="cak:Caul_4718"/>
<dbReference type="eggNOG" id="COG1057">
    <property type="taxonomic scope" value="Bacteria"/>
</dbReference>
<dbReference type="HOGENOM" id="CLU_069765_2_0_5"/>
<dbReference type="UniPathway" id="UPA00253">
    <property type="reaction ID" value="UER00332"/>
</dbReference>
<dbReference type="GO" id="GO:0005524">
    <property type="term" value="F:ATP binding"/>
    <property type="evidence" value="ECO:0007669"/>
    <property type="project" value="UniProtKB-KW"/>
</dbReference>
<dbReference type="GO" id="GO:0004515">
    <property type="term" value="F:nicotinate-nucleotide adenylyltransferase activity"/>
    <property type="evidence" value="ECO:0007669"/>
    <property type="project" value="UniProtKB-UniRule"/>
</dbReference>
<dbReference type="GO" id="GO:0009435">
    <property type="term" value="P:NAD biosynthetic process"/>
    <property type="evidence" value="ECO:0007669"/>
    <property type="project" value="UniProtKB-UniRule"/>
</dbReference>
<dbReference type="CDD" id="cd02165">
    <property type="entry name" value="NMNAT"/>
    <property type="match status" value="1"/>
</dbReference>
<dbReference type="Gene3D" id="3.40.50.620">
    <property type="entry name" value="HUPs"/>
    <property type="match status" value="1"/>
</dbReference>
<dbReference type="HAMAP" id="MF_00244">
    <property type="entry name" value="NaMN_adenylyltr"/>
    <property type="match status" value="1"/>
</dbReference>
<dbReference type="InterPro" id="IPR004821">
    <property type="entry name" value="Cyt_trans-like"/>
</dbReference>
<dbReference type="InterPro" id="IPR005248">
    <property type="entry name" value="NadD/NMNAT"/>
</dbReference>
<dbReference type="InterPro" id="IPR014729">
    <property type="entry name" value="Rossmann-like_a/b/a_fold"/>
</dbReference>
<dbReference type="NCBIfam" id="TIGR00482">
    <property type="entry name" value="nicotinate (nicotinamide) nucleotide adenylyltransferase"/>
    <property type="match status" value="1"/>
</dbReference>
<dbReference type="NCBIfam" id="NF000843">
    <property type="entry name" value="PRK00071.2-2"/>
    <property type="match status" value="1"/>
</dbReference>
<dbReference type="NCBIfam" id="NF000845">
    <property type="entry name" value="PRK00071.2-4"/>
    <property type="match status" value="1"/>
</dbReference>
<dbReference type="PANTHER" id="PTHR39321">
    <property type="entry name" value="NICOTINATE-NUCLEOTIDE ADENYLYLTRANSFERASE-RELATED"/>
    <property type="match status" value="1"/>
</dbReference>
<dbReference type="PANTHER" id="PTHR39321:SF3">
    <property type="entry name" value="PHOSPHOPANTETHEINE ADENYLYLTRANSFERASE"/>
    <property type="match status" value="1"/>
</dbReference>
<dbReference type="Pfam" id="PF01467">
    <property type="entry name" value="CTP_transf_like"/>
    <property type="match status" value="1"/>
</dbReference>
<dbReference type="SUPFAM" id="SSF52374">
    <property type="entry name" value="Nucleotidylyl transferase"/>
    <property type="match status" value="1"/>
</dbReference>